<name>CARB_LISMH</name>
<evidence type="ECO:0000255" key="1">
    <source>
        <dbReference type="HAMAP-Rule" id="MF_01210"/>
    </source>
</evidence>
<organism>
    <name type="scientific">Listeria monocytogenes serotype 4a (strain HCC23)</name>
    <dbReference type="NCBI Taxonomy" id="552536"/>
    <lineage>
        <taxon>Bacteria</taxon>
        <taxon>Bacillati</taxon>
        <taxon>Bacillota</taxon>
        <taxon>Bacilli</taxon>
        <taxon>Bacillales</taxon>
        <taxon>Listeriaceae</taxon>
        <taxon>Listeria</taxon>
    </lineage>
</organism>
<comment type="function">
    <text evidence="1">Large subunit of the glutamine-dependent carbamoyl phosphate synthetase (CPSase). CPSase catalyzes the formation of carbamoyl phosphate from the ammonia moiety of glutamine, carbonate, and phosphate donated by ATP, constituting the first step of 2 biosynthetic pathways, one leading to arginine and/or urea and the other to pyrimidine nucleotides. The large subunit (synthetase) binds the substrates ammonia (free or transferred from glutamine from the small subunit), hydrogencarbonate and ATP and carries out an ATP-coupled ligase reaction, activating hydrogencarbonate by forming carboxy phosphate which reacts with ammonia to form carbamoyl phosphate.</text>
</comment>
<comment type="catalytic activity">
    <reaction evidence="1">
        <text>hydrogencarbonate + L-glutamine + 2 ATP + H2O = carbamoyl phosphate + L-glutamate + 2 ADP + phosphate + 2 H(+)</text>
        <dbReference type="Rhea" id="RHEA:18633"/>
        <dbReference type="ChEBI" id="CHEBI:15377"/>
        <dbReference type="ChEBI" id="CHEBI:15378"/>
        <dbReference type="ChEBI" id="CHEBI:17544"/>
        <dbReference type="ChEBI" id="CHEBI:29985"/>
        <dbReference type="ChEBI" id="CHEBI:30616"/>
        <dbReference type="ChEBI" id="CHEBI:43474"/>
        <dbReference type="ChEBI" id="CHEBI:58228"/>
        <dbReference type="ChEBI" id="CHEBI:58359"/>
        <dbReference type="ChEBI" id="CHEBI:456216"/>
        <dbReference type="EC" id="6.3.5.5"/>
    </reaction>
</comment>
<comment type="catalytic activity">
    <molecule>Carbamoyl phosphate synthase large chain</molecule>
    <reaction evidence="1">
        <text>hydrogencarbonate + NH4(+) + 2 ATP = carbamoyl phosphate + 2 ADP + phosphate + 2 H(+)</text>
        <dbReference type="Rhea" id="RHEA:18029"/>
        <dbReference type="ChEBI" id="CHEBI:15378"/>
        <dbReference type="ChEBI" id="CHEBI:17544"/>
        <dbReference type="ChEBI" id="CHEBI:28938"/>
        <dbReference type="ChEBI" id="CHEBI:30616"/>
        <dbReference type="ChEBI" id="CHEBI:43474"/>
        <dbReference type="ChEBI" id="CHEBI:58228"/>
        <dbReference type="ChEBI" id="CHEBI:456216"/>
        <dbReference type="EC" id="6.3.4.16"/>
    </reaction>
</comment>
<comment type="cofactor">
    <cofactor evidence="1">
        <name>Mg(2+)</name>
        <dbReference type="ChEBI" id="CHEBI:18420"/>
    </cofactor>
    <cofactor evidence="1">
        <name>Mn(2+)</name>
        <dbReference type="ChEBI" id="CHEBI:29035"/>
    </cofactor>
    <text evidence="1">Binds 4 Mg(2+) or Mn(2+) ions per subunit.</text>
</comment>
<comment type="pathway">
    <text evidence="1">Amino-acid biosynthesis; L-arginine biosynthesis; carbamoyl phosphate from bicarbonate: step 1/1.</text>
</comment>
<comment type="pathway">
    <text evidence="1">Pyrimidine metabolism; UMP biosynthesis via de novo pathway; (S)-dihydroorotate from bicarbonate: step 1/3.</text>
</comment>
<comment type="subunit">
    <text evidence="1">Composed of two chains; the small (or glutamine) chain promotes the hydrolysis of glutamine to ammonia, which is used by the large (or ammonia) chain to synthesize carbamoyl phosphate. Tetramer of heterodimers (alpha,beta)4.</text>
</comment>
<comment type="domain">
    <text evidence="1">The large subunit is composed of 2 ATP-grasp domains that are involved in binding the 2 ATP molecules needed for carbamoyl phosphate synthesis. The N-terminal ATP-grasp domain (referred to as the carboxyphosphate synthetic component) catalyzes the ATP-dependent phosphorylation of hydrogencarbonate to carboxyphosphate and the subsequent nucleophilic attack by ammonia to form a carbamate intermediate. The C-terminal ATP-grasp domain (referred to as the carbamoyl phosphate synthetic component) then catalyzes the phosphorylation of carbamate with the second ATP to form the end product carbamoyl phosphate. The reactive and unstable enzyme intermediates are sequentially channeled from one active site to the next through the interior of the protein over a distance of at least 96 A.</text>
</comment>
<comment type="similarity">
    <text evidence="1">Belongs to the CarB family.</text>
</comment>
<keyword id="KW-0028">Amino-acid biosynthesis</keyword>
<keyword id="KW-0055">Arginine biosynthesis</keyword>
<keyword id="KW-0067">ATP-binding</keyword>
<keyword id="KW-0436">Ligase</keyword>
<keyword id="KW-0460">Magnesium</keyword>
<keyword id="KW-0464">Manganese</keyword>
<keyword id="KW-0479">Metal-binding</keyword>
<keyword id="KW-0547">Nucleotide-binding</keyword>
<keyword id="KW-0665">Pyrimidine biosynthesis</keyword>
<keyword id="KW-0677">Repeat</keyword>
<protein>
    <recommendedName>
        <fullName evidence="1">Carbamoyl phosphate synthase large chain</fullName>
        <ecNumber evidence="1">6.3.4.16</ecNumber>
        <ecNumber evidence="1">6.3.5.5</ecNumber>
    </recommendedName>
    <alternativeName>
        <fullName evidence="1">Carbamoyl phosphate synthetase ammonia chain</fullName>
    </alternativeName>
</protein>
<dbReference type="EC" id="6.3.4.16" evidence="1"/>
<dbReference type="EC" id="6.3.5.5" evidence="1"/>
<dbReference type="EMBL" id="CP001175">
    <property type="protein sequence ID" value="ACK39076.1"/>
    <property type="molecule type" value="Genomic_DNA"/>
</dbReference>
<dbReference type="RefSeq" id="WP_003736936.1">
    <property type="nucleotide sequence ID" value="NC_011660.1"/>
</dbReference>
<dbReference type="SMR" id="B8DDR7"/>
<dbReference type="KEGG" id="lmh:LMHCC_0721"/>
<dbReference type="HOGENOM" id="CLU_000513_1_2_9"/>
<dbReference type="UniPathway" id="UPA00068">
    <property type="reaction ID" value="UER00171"/>
</dbReference>
<dbReference type="UniPathway" id="UPA00070">
    <property type="reaction ID" value="UER00115"/>
</dbReference>
<dbReference type="GO" id="GO:0005737">
    <property type="term" value="C:cytoplasm"/>
    <property type="evidence" value="ECO:0007669"/>
    <property type="project" value="TreeGrafter"/>
</dbReference>
<dbReference type="GO" id="GO:0005524">
    <property type="term" value="F:ATP binding"/>
    <property type="evidence" value="ECO:0007669"/>
    <property type="project" value="UniProtKB-UniRule"/>
</dbReference>
<dbReference type="GO" id="GO:0004087">
    <property type="term" value="F:carbamoyl-phosphate synthase (ammonia) activity"/>
    <property type="evidence" value="ECO:0007669"/>
    <property type="project" value="RHEA"/>
</dbReference>
<dbReference type="GO" id="GO:0004088">
    <property type="term" value="F:carbamoyl-phosphate synthase (glutamine-hydrolyzing) activity"/>
    <property type="evidence" value="ECO:0007669"/>
    <property type="project" value="UniProtKB-UniRule"/>
</dbReference>
<dbReference type="GO" id="GO:0046872">
    <property type="term" value="F:metal ion binding"/>
    <property type="evidence" value="ECO:0007669"/>
    <property type="project" value="UniProtKB-KW"/>
</dbReference>
<dbReference type="GO" id="GO:0044205">
    <property type="term" value="P:'de novo' UMP biosynthetic process"/>
    <property type="evidence" value="ECO:0007669"/>
    <property type="project" value="UniProtKB-UniRule"/>
</dbReference>
<dbReference type="GO" id="GO:0006541">
    <property type="term" value="P:glutamine metabolic process"/>
    <property type="evidence" value="ECO:0007669"/>
    <property type="project" value="TreeGrafter"/>
</dbReference>
<dbReference type="GO" id="GO:0006526">
    <property type="term" value="P:L-arginine biosynthetic process"/>
    <property type="evidence" value="ECO:0007669"/>
    <property type="project" value="UniProtKB-UniRule"/>
</dbReference>
<dbReference type="CDD" id="cd01424">
    <property type="entry name" value="MGS_CPS_II"/>
    <property type="match status" value="1"/>
</dbReference>
<dbReference type="FunFam" id="1.10.1030.10:FF:000002">
    <property type="entry name" value="Carbamoyl-phosphate synthase large chain"/>
    <property type="match status" value="1"/>
</dbReference>
<dbReference type="FunFam" id="3.30.1490.20:FF:000001">
    <property type="entry name" value="Carbamoyl-phosphate synthase large chain"/>
    <property type="match status" value="1"/>
</dbReference>
<dbReference type="FunFam" id="3.30.470.20:FF:000001">
    <property type="entry name" value="Carbamoyl-phosphate synthase large chain"/>
    <property type="match status" value="1"/>
</dbReference>
<dbReference type="FunFam" id="3.30.470.20:FF:000026">
    <property type="entry name" value="Carbamoyl-phosphate synthase large chain"/>
    <property type="match status" value="1"/>
</dbReference>
<dbReference type="FunFam" id="3.40.50.1380:FF:000011">
    <property type="entry name" value="Carbamoyl-phosphate synthase large chain"/>
    <property type="match status" value="1"/>
</dbReference>
<dbReference type="FunFam" id="3.40.50.20:FF:000001">
    <property type="entry name" value="Carbamoyl-phosphate synthase large chain"/>
    <property type="match status" value="2"/>
</dbReference>
<dbReference type="Gene3D" id="3.40.50.20">
    <property type="match status" value="2"/>
</dbReference>
<dbReference type="Gene3D" id="3.30.1490.20">
    <property type="entry name" value="ATP-grasp fold, A domain"/>
    <property type="match status" value="1"/>
</dbReference>
<dbReference type="Gene3D" id="3.30.470.20">
    <property type="entry name" value="ATP-grasp fold, B domain"/>
    <property type="match status" value="2"/>
</dbReference>
<dbReference type="Gene3D" id="1.10.1030.10">
    <property type="entry name" value="Carbamoyl-phosphate synthetase, large subunit oligomerisation domain"/>
    <property type="match status" value="1"/>
</dbReference>
<dbReference type="Gene3D" id="3.40.50.1380">
    <property type="entry name" value="Methylglyoxal synthase-like domain"/>
    <property type="match status" value="1"/>
</dbReference>
<dbReference type="HAMAP" id="MF_01210_A">
    <property type="entry name" value="CPSase_L_chain_A"/>
    <property type="match status" value="1"/>
</dbReference>
<dbReference type="HAMAP" id="MF_01210_B">
    <property type="entry name" value="CPSase_L_chain_B"/>
    <property type="match status" value="1"/>
</dbReference>
<dbReference type="InterPro" id="IPR011761">
    <property type="entry name" value="ATP-grasp"/>
</dbReference>
<dbReference type="InterPro" id="IPR013815">
    <property type="entry name" value="ATP_grasp_subdomain_1"/>
</dbReference>
<dbReference type="InterPro" id="IPR006275">
    <property type="entry name" value="CarbamoylP_synth_lsu"/>
</dbReference>
<dbReference type="InterPro" id="IPR005480">
    <property type="entry name" value="CarbamoylP_synth_lsu_oligo"/>
</dbReference>
<dbReference type="InterPro" id="IPR036897">
    <property type="entry name" value="CarbamoylP_synth_lsu_oligo_sf"/>
</dbReference>
<dbReference type="InterPro" id="IPR005479">
    <property type="entry name" value="CbamoylP_synth_lsu-like_ATP-bd"/>
</dbReference>
<dbReference type="InterPro" id="IPR005483">
    <property type="entry name" value="CbamoylP_synth_lsu_CPSase_dom"/>
</dbReference>
<dbReference type="InterPro" id="IPR011607">
    <property type="entry name" value="MGS-like_dom"/>
</dbReference>
<dbReference type="InterPro" id="IPR036914">
    <property type="entry name" value="MGS-like_dom_sf"/>
</dbReference>
<dbReference type="InterPro" id="IPR033937">
    <property type="entry name" value="MGS_CPS_CarB"/>
</dbReference>
<dbReference type="InterPro" id="IPR016185">
    <property type="entry name" value="PreATP-grasp_dom_sf"/>
</dbReference>
<dbReference type="NCBIfam" id="TIGR01369">
    <property type="entry name" value="CPSaseII_lrg"/>
    <property type="match status" value="1"/>
</dbReference>
<dbReference type="NCBIfam" id="NF003671">
    <property type="entry name" value="PRK05294.1"/>
    <property type="match status" value="1"/>
</dbReference>
<dbReference type="NCBIfam" id="NF009455">
    <property type="entry name" value="PRK12815.1"/>
    <property type="match status" value="1"/>
</dbReference>
<dbReference type="PANTHER" id="PTHR11405:SF53">
    <property type="entry name" value="CARBAMOYL-PHOSPHATE SYNTHASE [AMMONIA], MITOCHONDRIAL"/>
    <property type="match status" value="1"/>
</dbReference>
<dbReference type="PANTHER" id="PTHR11405">
    <property type="entry name" value="CARBAMOYLTRANSFERASE FAMILY MEMBER"/>
    <property type="match status" value="1"/>
</dbReference>
<dbReference type="Pfam" id="PF02786">
    <property type="entry name" value="CPSase_L_D2"/>
    <property type="match status" value="2"/>
</dbReference>
<dbReference type="Pfam" id="PF02787">
    <property type="entry name" value="CPSase_L_D3"/>
    <property type="match status" value="1"/>
</dbReference>
<dbReference type="Pfam" id="PF02142">
    <property type="entry name" value="MGS"/>
    <property type="match status" value="1"/>
</dbReference>
<dbReference type="PRINTS" id="PR00098">
    <property type="entry name" value="CPSASE"/>
</dbReference>
<dbReference type="SMART" id="SM01096">
    <property type="entry name" value="CPSase_L_D3"/>
    <property type="match status" value="1"/>
</dbReference>
<dbReference type="SMART" id="SM00851">
    <property type="entry name" value="MGS"/>
    <property type="match status" value="1"/>
</dbReference>
<dbReference type="SUPFAM" id="SSF48108">
    <property type="entry name" value="Carbamoyl phosphate synthetase, large subunit connection domain"/>
    <property type="match status" value="1"/>
</dbReference>
<dbReference type="SUPFAM" id="SSF56059">
    <property type="entry name" value="Glutathione synthetase ATP-binding domain-like"/>
    <property type="match status" value="2"/>
</dbReference>
<dbReference type="SUPFAM" id="SSF52335">
    <property type="entry name" value="Methylglyoxal synthase-like"/>
    <property type="match status" value="1"/>
</dbReference>
<dbReference type="SUPFAM" id="SSF52440">
    <property type="entry name" value="PreATP-grasp domain"/>
    <property type="match status" value="2"/>
</dbReference>
<dbReference type="PROSITE" id="PS50975">
    <property type="entry name" value="ATP_GRASP"/>
    <property type="match status" value="2"/>
</dbReference>
<dbReference type="PROSITE" id="PS00866">
    <property type="entry name" value="CPSASE_1"/>
    <property type="match status" value="2"/>
</dbReference>
<dbReference type="PROSITE" id="PS00867">
    <property type="entry name" value="CPSASE_2"/>
    <property type="match status" value="2"/>
</dbReference>
<dbReference type="PROSITE" id="PS51855">
    <property type="entry name" value="MGS"/>
    <property type="match status" value="1"/>
</dbReference>
<gene>
    <name evidence="1" type="primary">carB</name>
    <name type="ordered locus">LMHCC_0721</name>
</gene>
<reference key="1">
    <citation type="journal article" date="2011" name="J. Bacteriol.">
        <title>Genome sequence of lineage III Listeria monocytogenes strain HCC23.</title>
        <authorList>
            <person name="Steele C.L."/>
            <person name="Donaldson J.R."/>
            <person name="Paul D."/>
            <person name="Banes M.M."/>
            <person name="Arick T."/>
            <person name="Bridges S.M."/>
            <person name="Lawrence M.L."/>
        </authorList>
    </citation>
    <scope>NUCLEOTIDE SEQUENCE [LARGE SCALE GENOMIC DNA]</scope>
    <source>
        <strain>HCC23</strain>
    </source>
</reference>
<feature type="chain" id="PRO_1000164711" description="Carbamoyl phosphate synthase large chain">
    <location>
        <begin position="1"/>
        <end position="1070"/>
    </location>
</feature>
<feature type="domain" description="ATP-grasp 1" evidence="1">
    <location>
        <begin position="133"/>
        <end position="327"/>
    </location>
</feature>
<feature type="domain" description="ATP-grasp 2" evidence="1">
    <location>
        <begin position="671"/>
        <end position="861"/>
    </location>
</feature>
<feature type="domain" description="MGS-like" evidence="1">
    <location>
        <begin position="930"/>
        <end position="1070"/>
    </location>
</feature>
<feature type="region of interest" description="Carboxyphosphate synthetic domain" evidence="1">
    <location>
        <begin position="1"/>
        <end position="401"/>
    </location>
</feature>
<feature type="region of interest" description="Oligomerization domain" evidence="1">
    <location>
        <begin position="402"/>
        <end position="546"/>
    </location>
</feature>
<feature type="region of interest" description="Carbamoyl phosphate synthetic domain" evidence="1">
    <location>
        <begin position="547"/>
        <end position="929"/>
    </location>
</feature>
<feature type="region of interest" description="Allosteric domain" evidence="1">
    <location>
        <begin position="930"/>
        <end position="1070"/>
    </location>
</feature>
<feature type="binding site" evidence="1">
    <location>
        <position position="129"/>
    </location>
    <ligand>
        <name>ATP</name>
        <dbReference type="ChEBI" id="CHEBI:30616"/>
        <label>1</label>
    </ligand>
</feature>
<feature type="binding site" evidence="1">
    <location>
        <position position="169"/>
    </location>
    <ligand>
        <name>ATP</name>
        <dbReference type="ChEBI" id="CHEBI:30616"/>
        <label>1</label>
    </ligand>
</feature>
<feature type="binding site" evidence="1">
    <location>
        <position position="175"/>
    </location>
    <ligand>
        <name>ATP</name>
        <dbReference type="ChEBI" id="CHEBI:30616"/>
        <label>1</label>
    </ligand>
</feature>
<feature type="binding site" evidence="1">
    <location>
        <position position="176"/>
    </location>
    <ligand>
        <name>ATP</name>
        <dbReference type="ChEBI" id="CHEBI:30616"/>
        <label>1</label>
    </ligand>
</feature>
<feature type="binding site" evidence="1">
    <location>
        <position position="208"/>
    </location>
    <ligand>
        <name>ATP</name>
        <dbReference type="ChEBI" id="CHEBI:30616"/>
        <label>1</label>
    </ligand>
</feature>
<feature type="binding site" evidence="1">
    <location>
        <position position="210"/>
    </location>
    <ligand>
        <name>ATP</name>
        <dbReference type="ChEBI" id="CHEBI:30616"/>
        <label>1</label>
    </ligand>
</feature>
<feature type="binding site" evidence="1">
    <location>
        <position position="215"/>
    </location>
    <ligand>
        <name>ATP</name>
        <dbReference type="ChEBI" id="CHEBI:30616"/>
        <label>1</label>
    </ligand>
</feature>
<feature type="binding site" evidence="1">
    <location>
        <position position="241"/>
    </location>
    <ligand>
        <name>ATP</name>
        <dbReference type="ChEBI" id="CHEBI:30616"/>
        <label>1</label>
    </ligand>
</feature>
<feature type="binding site" evidence="1">
    <location>
        <position position="242"/>
    </location>
    <ligand>
        <name>ATP</name>
        <dbReference type="ChEBI" id="CHEBI:30616"/>
        <label>1</label>
    </ligand>
</feature>
<feature type="binding site" evidence="1">
    <location>
        <position position="243"/>
    </location>
    <ligand>
        <name>ATP</name>
        <dbReference type="ChEBI" id="CHEBI:30616"/>
        <label>1</label>
    </ligand>
</feature>
<feature type="binding site" evidence="1">
    <location>
        <position position="284"/>
    </location>
    <ligand>
        <name>ATP</name>
        <dbReference type="ChEBI" id="CHEBI:30616"/>
        <label>1</label>
    </ligand>
</feature>
<feature type="binding site" evidence="1">
    <location>
        <position position="284"/>
    </location>
    <ligand>
        <name>Mg(2+)</name>
        <dbReference type="ChEBI" id="CHEBI:18420"/>
        <label>1</label>
    </ligand>
</feature>
<feature type="binding site" evidence="1">
    <location>
        <position position="284"/>
    </location>
    <ligand>
        <name>Mn(2+)</name>
        <dbReference type="ChEBI" id="CHEBI:29035"/>
        <label>1</label>
    </ligand>
</feature>
<feature type="binding site" evidence="1">
    <location>
        <position position="298"/>
    </location>
    <ligand>
        <name>ATP</name>
        <dbReference type="ChEBI" id="CHEBI:30616"/>
        <label>1</label>
    </ligand>
</feature>
<feature type="binding site" evidence="1">
    <location>
        <position position="298"/>
    </location>
    <ligand>
        <name>Mg(2+)</name>
        <dbReference type="ChEBI" id="CHEBI:18420"/>
        <label>1</label>
    </ligand>
</feature>
<feature type="binding site" evidence="1">
    <location>
        <position position="298"/>
    </location>
    <ligand>
        <name>Mg(2+)</name>
        <dbReference type="ChEBI" id="CHEBI:18420"/>
        <label>2</label>
    </ligand>
</feature>
<feature type="binding site" evidence="1">
    <location>
        <position position="298"/>
    </location>
    <ligand>
        <name>Mn(2+)</name>
        <dbReference type="ChEBI" id="CHEBI:29035"/>
        <label>1</label>
    </ligand>
</feature>
<feature type="binding site" evidence="1">
    <location>
        <position position="298"/>
    </location>
    <ligand>
        <name>Mn(2+)</name>
        <dbReference type="ChEBI" id="CHEBI:29035"/>
        <label>2</label>
    </ligand>
</feature>
<feature type="binding site" evidence="1">
    <location>
        <position position="300"/>
    </location>
    <ligand>
        <name>Mg(2+)</name>
        <dbReference type="ChEBI" id="CHEBI:18420"/>
        <label>2</label>
    </ligand>
</feature>
<feature type="binding site" evidence="1">
    <location>
        <position position="300"/>
    </location>
    <ligand>
        <name>Mn(2+)</name>
        <dbReference type="ChEBI" id="CHEBI:29035"/>
        <label>2</label>
    </ligand>
</feature>
<feature type="binding site" evidence="1">
    <location>
        <position position="707"/>
    </location>
    <ligand>
        <name>ATP</name>
        <dbReference type="ChEBI" id="CHEBI:30616"/>
        <label>2</label>
    </ligand>
</feature>
<feature type="binding site" evidence="1">
    <location>
        <position position="746"/>
    </location>
    <ligand>
        <name>ATP</name>
        <dbReference type="ChEBI" id="CHEBI:30616"/>
        <label>2</label>
    </ligand>
</feature>
<feature type="binding site" evidence="1">
    <location>
        <position position="748"/>
    </location>
    <ligand>
        <name>ATP</name>
        <dbReference type="ChEBI" id="CHEBI:30616"/>
        <label>2</label>
    </ligand>
</feature>
<feature type="binding site" evidence="1">
    <location>
        <position position="752"/>
    </location>
    <ligand>
        <name>ATP</name>
        <dbReference type="ChEBI" id="CHEBI:30616"/>
        <label>2</label>
    </ligand>
</feature>
<feature type="binding site" evidence="1">
    <location>
        <position position="777"/>
    </location>
    <ligand>
        <name>ATP</name>
        <dbReference type="ChEBI" id="CHEBI:30616"/>
        <label>2</label>
    </ligand>
</feature>
<feature type="binding site" evidence="1">
    <location>
        <position position="778"/>
    </location>
    <ligand>
        <name>ATP</name>
        <dbReference type="ChEBI" id="CHEBI:30616"/>
        <label>2</label>
    </ligand>
</feature>
<feature type="binding site" evidence="1">
    <location>
        <position position="779"/>
    </location>
    <ligand>
        <name>ATP</name>
        <dbReference type="ChEBI" id="CHEBI:30616"/>
        <label>2</label>
    </ligand>
</feature>
<feature type="binding site" evidence="1">
    <location>
        <position position="780"/>
    </location>
    <ligand>
        <name>ATP</name>
        <dbReference type="ChEBI" id="CHEBI:30616"/>
        <label>2</label>
    </ligand>
</feature>
<feature type="binding site" evidence="1">
    <location>
        <position position="820"/>
    </location>
    <ligand>
        <name>ATP</name>
        <dbReference type="ChEBI" id="CHEBI:30616"/>
        <label>2</label>
    </ligand>
</feature>
<feature type="binding site" evidence="1">
    <location>
        <position position="820"/>
    </location>
    <ligand>
        <name>Mg(2+)</name>
        <dbReference type="ChEBI" id="CHEBI:18420"/>
        <label>3</label>
    </ligand>
</feature>
<feature type="binding site" evidence="1">
    <location>
        <position position="820"/>
    </location>
    <ligand>
        <name>Mn(2+)</name>
        <dbReference type="ChEBI" id="CHEBI:29035"/>
        <label>3</label>
    </ligand>
</feature>
<feature type="binding site" evidence="1">
    <location>
        <position position="832"/>
    </location>
    <ligand>
        <name>ATP</name>
        <dbReference type="ChEBI" id="CHEBI:30616"/>
        <label>2</label>
    </ligand>
</feature>
<feature type="binding site" evidence="1">
    <location>
        <position position="832"/>
    </location>
    <ligand>
        <name>Mg(2+)</name>
        <dbReference type="ChEBI" id="CHEBI:18420"/>
        <label>3</label>
    </ligand>
</feature>
<feature type="binding site" evidence="1">
    <location>
        <position position="832"/>
    </location>
    <ligand>
        <name>Mg(2+)</name>
        <dbReference type="ChEBI" id="CHEBI:18420"/>
        <label>4</label>
    </ligand>
</feature>
<feature type="binding site" evidence="1">
    <location>
        <position position="832"/>
    </location>
    <ligand>
        <name>Mn(2+)</name>
        <dbReference type="ChEBI" id="CHEBI:29035"/>
        <label>3</label>
    </ligand>
</feature>
<feature type="binding site" evidence="1">
    <location>
        <position position="832"/>
    </location>
    <ligand>
        <name>Mn(2+)</name>
        <dbReference type="ChEBI" id="CHEBI:29035"/>
        <label>4</label>
    </ligand>
</feature>
<feature type="binding site" evidence="1">
    <location>
        <position position="834"/>
    </location>
    <ligand>
        <name>Mg(2+)</name>
        <dbReference type="ChEBI" id="CHEBI:18420"/>
        <label>4</label>
    </ligand>
</feature>
<feature type="binding site" evidence="1">
    <location>
        <position position="834"/>
    </location>
    <ligand>
        <name>Mn(2+)</name>
        <dbReference type="ChEBI" id="CHEBI:29035"/>
        <label>4</label>
    </ligand>
</feature>
<proteinExistence type="inferred from homology"/>
<accession>B8DDR7</accession>
<sequence>MPKRDDIKTILVIGSGPIVIGQAAEFDYAGTQACLSLKEEGYRVVLVNSNPATIMTDAEMADKVYIEPITLDFVSRIIRKERPDAILPTLGGQTGLNMAMELSAAGILDECNVEVLGTDLTAIKKAEDREAFRDLMNELGEPVPESDIIHNLDEAYTFVERIGYPVIVRPAYTLGGSGGGICHNEQELIETVTSGLKLSPVTQCLLEKSIAGFKEVEYEVMRDANNNAMVVCNMENIDPVGIHTGDSIVVAPSQTLSDREYQLLRDVSLKIIRALEIEGGCNVQLALDPDSYNYYVIEVNPRVSRSSALASKATGYPIAKLAAKIAVGLTLDEVRNPVTGTTFAHFEPTLDYVVAKIPRFAFDKFEQADRRLGTQMKATGEVMAIGRSWEEALLKAVRSLEIGADHLLLEEAENADEATLERKICFPEDDRLFFLAAALRRGQTIEQLHAKTKIDLFFLYKLSKTIELENRIKENPHNQEILAEAKRAGFSDAFLATCWNVDEQAIYDLRKAQNLFPVYKMVDTCAAEFESTTPYFYSTYEEENESTRSAKESVIVLGSGPIRIGQGVEFDYATVHSVWAIQQAGYEAIIINNNPETVSTDFSISDKLYFEPLTLEDVMHVIEIEQPLGVVVQFGGQTAINLADGLAKRGVKILGTSLEDTDRAENRDAFEKALEILQIPQPAGKTATSVEEAINVATDIGYPVLVRPSYVLGGRAMEIVESEEALKHYMTNAVKVNPKHPVLVDRYVSGQEVEVDAISDGENVLIPGIMEHIERAGVHSGDSIAVYPAQRLSSQVKNTIVDYTTRLATGLNIIGMLNIQYVVDGEEVFVIEVNPRSSRTAPFLSKITEIPMANVATRVILGENLIDLGYTPGLAPEKQEIFVKVPVFSFAKLRSVDTSLGPEMKSTGEVMGKDVTLEKALYKGFVASGTTMHDYGTVLLTVADRDKEEAVELAKRFNRIGFTIMATKGTASTLEEADIPVSQVKKIGENQETLIDYIRNGQVTLVVNTLTTGKRPERDGFQIRRESVENGIPVCTSLDTAEAILRVLESRSFELESMNASEVKQPKARV</sequence>